<sequence>MSIRERLLATVSRYIAAYNEFDPSAMKTVRTVSCLTHGIAPTCKFTQSVEEHTKHMMLSRGVFRSVNASIVDDGTTVVDEGSRKVVVKVKLRCETIVGPYENEAMFIMAMDEEGTLVDGIFQFLDTACFRQFQGRLEEAHVSRD</sequence>
<keyword id="KW-1185">Reference proteome</keyword>
<proteinExistence type="inferred from homology"/>
<reference key="1">
    <citation type="journal article" date="2016" name="Genome Announc.">
        <title>Draft genome sequences of fungus Aspergillus calidoustus.</title>
        <authorList>
            <person name="Horn F."/>
            <person name="Linde J."/>
            <person name="Mattern D.J."/>
            <person name="Walther G."/>
            <person name="Guthke R."/>
            <person name="Scherlach K."/>
            <person name="Martin K."/>
            <person name="Brakhage A.A."/>
            <person name="Petzke L."/>
            <person name="Valiante V."/>
        </authorList>
    </citation>
    <scope>NUCLEOTIDE SEQUENCE [LARGE SCALE GENOMIC DNA]</scope>
    <source>
        <strain>SF006504</strain>
    </source>
</reference>
<reference key="2">
    <citation type="journal article" date="2017" name="ACS Chem. Biol.">
        <title>Discovery of an Extended Austinoid Biosynthetic Pathway in Aspergillus calidoustus.</title>
        <authorList>
            <person name="Valiante V."/>
            <person name="Mattern D.J."/>
            <person name="Schueffler A."/>
            <person name="Horn F."/>
            <person name="Walther G."/>
            <person name="Scherlach K."/>
            <person name="Petzke L."/>
            <person name="Dickhaut J."/>
            <person name="Guthke R."/>
            <person name="Hertweck C."/>
            <person name="Nett M."/>
            <person name="Thines E."/>
            <person name="Brakhage A.A."/>
        </authorList>
    </citation>
    <scope>FUNCTION</scope>
    <scope>DISRUPTION PHENOTYPE</scope>
    <scope>PATHWAY</scope>
</reference>
<reference key="3">
    <citation type="journal article" date="2017" name="ACS Chem. Biol.">
        <title>Rewiring of the austinoid biosynthetic pathway in filamentous fungi.</title>
        <authorList>
            <person name="Mattern D.J."/>
            <person name="Valiante V."/>
            <person name="Horn F."/>
            <person name="Petzke L."/>
            <person name="Brakhage A.A."/>
        </authorList>
    </citation>
    <scope>FUNCTION</scope>
</reference>
<feature type="chain" id="PRO_0000453835" description="Austinoid biosynthesis cluster protein S">
    <location>
        <begin position="1"/>
        <end position="144"/>
    </location>
</feature>
<protein>
    <recommendedName>
        <fullName evidence="5">Austinoid biosynthesis cluster protein S</fullName>
    </recommendedName>
</protein>
<dbReference type="EMBL" id="CDMC01000024">
    <property type="protein sequence ID" value="CEL11258.1"/>
    <property type="molecule type" value="Genomic_DNA"/>
</dbReference>
<dbReference type="SMR" id="A0A0U5CJU2"/>
<dbReference type="STRING" id="454130.A0A0U5CJU2"/>
<dbReference type="OMA" id="LRCETIV"/>
<dbReference type="OrthoDB" id="3758478at2759"/>
<dbReference type="UniPathway" id="UPA00213"/>
<dbReference type="Proteomes" id="UP000054771">
    <property type="component" value="Unassembled WGS sequence"/>
</dbReference>
<dbReference type="GO" id="GO:0016114">
    <property type="term" value="P:terpenoid biosynthetic process"/>
    <property type="evidence" value="ECO:0007669"/>
    <property type="project" value="UniProtKB-UniPathway"/>
</dbReference>
<dbReference type="InterPro" id="IPR050977">
    <property type="entry name" value="Fungal_Meroterpenoid_Isomerase"/>
</dbReference>
<dbReference type="PANTHER" id="PTHR39598:SF1">
    <property type="entry name" value="AUSTINOID BIOSYNTHESIS CLUSTERS PROTEIN F-RELATED"/>
    <property type="match status" value="1"/>
</dbReference>
<dbReference type="PANTHER" id="PTHR39598">
    <property type="entry name" value="AUSTINOL SYNTHESIS PROTEIN F-RELATED"/>
    <property type="match status" value="1"/>
</dbReference>
<comment type="function">
    <text evidence="1 3 4">Part of the gene cluster that mediates the biosynthesis of calidodehydroaustin, a fungal meroterpenoid (PubMed:28233494, PubMed:29076725). The first step of the pathway is the synthesis of 3,5-dimethylorsellinic acid by the polyketide synthase ausA (PubMed:28233494). 3,5-dimethylorsellinic acid is then prenylated by the polyprenyl transferase ausN (PubMed:28233494). Further epoxidation by the FAD-dependent monooxygenase ausM and cyclization by the probable terpene cyclase ausL lead to the formation of protoaustinoid A (By similarity). Protoaustinoid A is then oxidized to spiro-lactone preaustinoid A3 by the combined action of the FAD-binding monooxygenases ausB and ausC, and the dioxygenase ausE (By similarity). Acid-catalyzed keto-rearrangement and ring contraction of the tetraketide portion of preaustinoid A3 by ausJ lead to the formation of preaustinoid A4 (By similarity). The aldo-keto reductase ausK, with the help of ausH, is involved in the next step by transforming preaustinoid A4 into isoaustinone which is in turn hydroxylated by the P450 monooxygenase ausI to form austinolide (By similarity). The cytochrome P450 monooxygenase ausG modifies austinolide to austinol (By similarity). Austinol is further acetylated to austin by the O-acetyltransferase ausP, which spontaneously changes to dehydroaustin (PubMed:28233494). The cytochrome P450 monooxygenase ausR then converts dehydroaustin is into 7-dehydrodehydroaustin (PubMed:28233494). The hydroxylation catalyzed by ausR permits the O-acetyltransferase ausQ to add an additional acetyl group to the molecule, leading to the formation of acetoxydehydroaustin (PubMed:28233494). The short chain dehydrogenase ausT catalyzes the reduction of the double bond present between carbon atoms 1 and 2 to convert 7-dehydrodehydroaustin into 1,2-dihydro-7-hydroxydehydroaustin (PubMed:28233494). AusQ catalyzes not only an acetylation reaction but also the addition of the PKS ausV diketide product to 1,2-dihydro-7-hydroxydehydroaustin, forming precalidodehydroaustin (PubMed:28233494). Finally, the iron/alpha-ketoglutarate-dependent dioxygenase converts precalidodehydroaustin into calidodehydroaustin (PubMed:28233494). AusS is necessary for austinoids production and may play a possible function as a regulator (PubMed:28233494).</text>
</comment>
<comment type="function">
    <text evidence="3">May play a possible function as a regulator.</text>
</comment>
<comment type="pathway">
    <text evidence="7">Secondary metabolite biosynthesis; terpenoid biosynthesis.</text>
</comment>
<comment type="subunit">
    <text evidence="2">Homodimer.</text>
</comment>
<comment type="disruption phenotype">
    <text evidence="3">Leads to a complete loss of austinoid production.</text>
</comment>
<comment type="miscellaneous">
    <text evidence="8">In A.calidoustus, the austinoid gene cluster lies on a contiguous DNA region, while clusters from E.nidulans and P.brasilianum are split in their respective genomes. Genetic rearrangements provoked variability among the clusters and E.nidulans produces the least number of austionoid derivatives with the end products austinol and dehydroaustinol, while P.brasilianum can produce until acetoxydehydroaustin, and A.calidoustus produces the highest number of identified derivatives.</text>
</comment>
<comment type="similarity">
    <text evidence="6">Belongs to the trt14 isomerase family.</text>
</comment>
<name>AUSS_ASPCI</name>
<organism>
    <name type="scientific">Aspergillus calidoustus</name>
    <dbReference type="NCBI Taxonomy" id="454130"/>
    <lineage>
        <taxon>Eukaryota</taxon>
        <taxon>Fungi</taxon>
        <taxon>Dikarya</taxon>
        <taxon>Ascomycota</taxon>
        <taxon>Pezizomycotina</taxon>
        <taxon>Eurotiomycetes</taxon>
        <taxon>Eurotiomycetidae</taxon>
        <taxon>Eurotiales</taxon>
        <taxon>Aspergillaceae</taxon>
        <taxon>Aspergillus</taxon>
        <taxon>Aspergillus subgen. Nidulantes</taxon>
    </lineage>
</organism>
<accession>A0A0U5CJU2</accession>
<evidence type="ECO:0000250" key="1">
    <source>
        <dbReference type="UniProtKB" id="C8VQ92"/>
    </source>
</evidence>
<evidence type="ECO:0000250" key="2">
    <source>
        <dbReference type="UniProtKB" id="Q5AR31"/>
    </source>
</evidence>
<evidence type="ECO:0000269" key="3">
    <source>
    </source>
</evidence>
<evidence type="ECO:0000269" key="4">
    <source>
    </source>
</evidence>
<evidence type="ECO:0000303" key="5">
    <source>
    </source>
</evidence>
<evidence type="ECO:0000305" key="6"/>
<evidence type="ECO:0000305" key="7">
    <source>
    </source>
</evidence>
<evidence type="ECO:0000305" key="8">
    <source>
    </source>
</evidence>
<gene>
    <name evidence="5" type="primary">ausS</name>
    <name type="ORF">ASPCAL14361</name>
</gene>